<keyword id="KW-0378">Hydrolase</keyword>
<keyword id="KW-0479">Metal-binding</keyword>
<keyword id="KW-0482">Metalloprotease</keyword>
<keyword id="KW-0645">Protease</keyword>
<keyword id="KW-0862">Zinc</keyword>
<accession>B0TQL1</accession>
<dbReference type="EMBL" id="CP000931">
    <property type="protein sequence ID" value="ABZ75004.1"/>
    <property type="molecule type" value="Genomic_DNA"/>
</dbReference>
<dbReference type="RefSeq" id="WP_012275558.1">
    <property type="nucleotide sequence ID" value="NC_010334.1"/>
</dbReference>
<dbReference type="SMR" id="B0TQL1"/>
<dbReference type="STRING" id="458817.Shal_0429"/>
<dbReference type="KEGG" id="shl:Shal_0429"/>
<dbReference type="eggNOG" id="COG2003">
    <property type="taxonomic scope" value="Bacteria"/>
</dbReference>
<dbReference type="HOGENOM" id="CLU_073529_0_1_6"/>
<dbReference type="OrthoDB" id="9804482at2"/>
<dbReference type="Proteomes" id="UP000001317">
    <property type="component" value="Chromosome"/>
</dbReference>
<dbReference type="GO" id="GO:0046872">
    <property type="term" value="F:metal ion binding"/>
    <property type="evidence" value="ECO:0007669"/>
    <property type="project" value="UniProtKB-KW"/>
</dbReference>
<dbReference type="GO" id="GO:0008237">
    <property type="term" value="F:metallopeptidase activity"/>
    <property type="evidence" value="ECO:0007669"/>
    <property type="project" value="UniProtKB-KW"/>
</dbReference>
<dbReference type="GO" id="GO:0006508">
    <property type="term" value="P:proteolysis"/>
    <property type="evidence" value="ECO:0007669"/>
    <property type="project" value="UniProtKB-KW"/>
</dbReference>
<dbReference type="CDD" id="cd08071">
    <property type="entry name" value="MPN_DUF2466"/>
    <property type="match status" value="1"/>
</dbReference>
<dbReference type="FunFam" id="3.40.140.10:FF:000032">
    <property type="entry name" value="DNA repair protein RadC"/>
    <property type="match status" value="1"/>
</dbReference>
<dbReference type="Gene3D" id="3.40.140.10">
    <property type="entry name" value="Cytidine Deaminase, domain 2"/>
    <property type="match status" value="1"/>
</dbReference>
<dbReference type="InterPro" id="IPR037518">
    <property type="entry name" value="MPN"/>
</dbReference>
<dbReference type="InterPro" id="IPR025657">
    <property type="entry name" value="RadC_JAB"/>
</dbReference>
<dbReference type="InterPro" id="IPR010994">
    <property type="entry name" value="RuvA_2-like"/>
</dbReference>
<dbReference type="InterPro" id="IPR001405">
    <property type="entry name" value="UPF0758"/>
</dbReference>
<dbReference type="InterPro" id="IPR020891">
    <property type="entry name" value="UPF0758_CS"/>
</dbReference>
<dbReference type="InterPro" id="IPR046778">
    <property type="entry name" value="UPF0758_N"/>
</dbReference>
<dbReference type="NCBIfam" id="NF000642">
    <property type="entry name" value="PRK00024.1"/>
    <property type="match status" value="1"/>
</dbReference>
<dbReference type="NCBIfam" id="TIGR00608">
    <property type="entry name" value="radc"/>
    <property type="match status" value="1"/>
</dbReference>
<dbReference type="PANTHER" id="PTHR30471">
    <property type="entry name" value="DNA REPAIR PROTEIN RADC"/>
    <property type="match status" value="1"/>
</dbReference>
<dbReference type="PANTHER" id="PTHR30471:SF3">
    <property type="entry name" value="UPF0758 PROTEIN YEES-RELATED"/>
    <property type="match status" value="1"/>
</dbReference>
<dbReference type="Pfam" id="PF04002">
    <property type="entry name" value="RadC"/>
    <property type="match status" value="1"/>
</dbReference>
<dbReference type="Pfam" id="PF20582">
    <property type="entry name" value="UPF0758_N"/>
    <property type="match status" value="1"/>
</dbReference>
<dbReference type="SUPFAM" id="SSF102712">
    <property type="entry name" value="JAB1/MPN domain"/>
    <property type="match status" value="1"/>
</dbReference>
<dbReference type="SUPFAM" id="SSF47781">
    <property type="entry name" value="RuvA domain 2-like"/>
    <property type="match status" value="1"/>
</dbReference>
<dbReference type="PROSITE" id="PS50249">
    <property type="entry name" value="MPN"/>
    <property type="match status" value="1"/>
</dbReference>
<dbReference type="PROSITE" id="PS01302">
    <property type="entry name" value="UPF0758"/>
    <property type="match status" value="1"/>
</dbReference>
<protein>
    <recommendedName>
        <fullName>UPF0758 protein Shal_0429</fullName>
    </recommendedName>
</protein>
<sequence length="225" mass="24911">MAIKDWPVGEGPREKLLNQGVKQLSDAELLAVLLRVGLKGLSAVELARTMINEFGGLRGLLAASQTQVCRLDGIGPVKFAQMQAAVELGTRISQENLQRGKILSDPDLTRDYLMRQLSDRAYEVFAILLLDSQHRVIQFVELFRGTINSASVYPREVVSLVLEKKAAAVIVCHNHPSGIAEPSTADRRITERLKQALQTIDVSLLDHMVVGDREIVSFAERGWID</sequence>
<evidence type="ECO:0000255" key="1">
    <source>
        <dbReference type="PROSITE-ProRule" id="PRU01182"/>
    </source>
</evidence>
<evidence type="ECO:0000305" key="2"/>
<proteinExistence type="inferred from homology"/>
<comment type="similarity">
    <text evidence="2">Belongs to the UPF0758 family.</text>
</comment>
<organism>
    <name type="scientific">Shewanella halifaxensis (strain HAW-EB4)</name>
    <dbReference type="NCBI Taxonomy" id="458817"/>
    <lineage>
        <taxon>Bacteria</taxon>
        <taxon>Pseudomonadati</taxon>
        <taxon>Pseudomonadota</taxon>
        <taxon>Gammaproteobacteria</taxon>
        <taxon>Alteromonadales</taxon>
        <taxon>Shewanellaceae</taxon>
        <taxon>Shewanella</taxon>
    </lineage>
</organism>
<feature type="chain" id="PRO_1000074152" description="UPF0758 protein Shal_0429">
    <location>
        <begin position="1"/>
        <end position="225"/>
    </location>
</feature>
<feature type="domain" description="MPN" evidence="1">
    <location>
        <begin position="102"/>
        <end position="224"/>
    </location>
</feature>
<feature type="short sequence motif" description="JAMM motif" evidence="1">
    <location>
        <begin position="173"/>
        <end position="186"/>
    </location>
</feature>
<feature type="binding site" evidence="1">
    <location>
        <position position="173"/>
    </location>
    <ligand>
        <name>Zn(2+)</name>
        <dbReference type="ChEBI" id="CHEBI:29105"/>
        <note>catalytic</note>
    </ligand>
</feature>
<feature type="binding site" evidence="1">
    <location>
        <position position="175"/>
    </location>
    <ligand>
        <name>Zn(2+)</name>
        <dbReference type="ChEBI" id="CHEBI:29105"/>
        <note>catalytic</note>
    </ligand>
</feature>
<feature type="binding site" evidence="1">
    <location>
        <position position="186"/>
    </location>
    <ligand>
        <name>Zn(2+)</name>
        <dbReference type="ChEBI" id="CHEBI:29105"/>
        <note>catalytic</note>
    </ligand>
</feature>
<gene>
    <name type="ordered locus">Shal_0429</name>
</gene>
<name>Y429_SHEHH</name>
<reference key="1">
    <citation type="submission" date="2008-01" db="EMBL/GenBank/DDBJ databases">
        <title>Complete sequence of Shewanella halifaxensis HAW-EB4.</title>
        <authorList>
            <consortium name="US DOE Joint Genome Institute"/>
            <person name="Copeland A."/>
            <person name="Lucas S."/>
            <person name="Lapidus A."/>
            <person name="Glavina del Rio T."/>
            <person name="Dalin E."/>
            <person name="Tice H."/>
            <person name="Bruce D."/>
            <person name="Goodwin L."/>
            <person name="Pitluck S."/>
            <person name="Sims D."/>
            <person name="Brettin T."/>
            <person name="Detter J.C."/>
            <person name="Han C."/>
            <person name="Kuske C.R."/>
            <person name="Schmutz J."/>
            <person name="Larimer F."/>
            <person name="Land M."/>
            <person name="Hauser L."/>
            <person name="Kyrpides N."/>
            <person name="Kim E."/>
            <person name="Zhao J.-S."/>
            <person name="Richardson P."/>
        </authorList>
    </citation>
    <scope>NUCLEOTIDE SEQUENCE [LARGE SCALE GENOMIC DNA]</scope>
    <source>
        <strain>HAW-EB4</strain>
    </source>
</reference>